<comment type="function">
    <text evidence="1">Catalyzes the NAD(P)-dependent oxidation of 4-(phosphooxy)-L-threonine (HTP) into 2-amino-3-oxo-4-(phosphooxy)butyric acid which spontaneously decarboxylates to form 3-amino-2-oxopropyl phosphate (AHAP).</text>
</comment>
<comment type="catalytic activity">
    <reaction evidence="1">
        <text>4-(phosphooxy)-L-threonine + NAD(+) = 3-amino-2-oxopropyl phosphate + CO2 + NADH</text>
        <dbReference type="Rhea" id="RHEA:32275"/>
        <dbReference type="ChEBI" id="CHEBI:16526"/>
        <dbReference type="ChEBI" id="CHEBI:57279"/>
        <dbReference type="ChEBI" id="CHEBI:57540"/>
        <dbReference type="ChEBI" id="CHEBI:57945"/>
        <dbReference type="ChEBI" id="CHEBI:58452"/>
        <dbReference type="EC" id="1.1.1.262"/>
    </reaction>
</comment>
<comment type="cofactor">
    <cofactor evidence="1">
        <name>Zn(2+)</name>
        <dbReference type="ChEBI" id="CHEBI:29105"/>
    </cofactor>
    <cofactor evidence="1">
        <name>Mg(2+)</name>
        <dbReference type="ChEBI" id="CHEBI:18420"/>
    </cofactor>
    <cofactor evidence="1">
        <name>Co(2+)</name>
        <dbReference type="ChEBI" id="CHEBI:48828"/>
    </cofactor>
    <text evidence="1">Binds 1 divalent metal cation per subunit. Can use ions such as Zn(2+), Mg(2+) or Co(2+).</text>
</comment>
<comment type="pathway">
    <text evidence="1">Cofactor biosynthesis; pyridoxine 5'-phosphate biosynthesis; pyridoxine 5'-phosphate from D-erythrose 4-phosphate: step 4/5.</text>
</comment>
<comment type="subunit">
    <text evidence="1">Homodimer.</text>
</comment>
<comment type="subcellular location">
    <subcellularLocation>
        <location evidence="1">Cytoplasm</location>
    </subcellularLocation>
</comment>
<comment type="miscellaneous">
    <text evidence="1">The active site is located at the dimer interface.</text>
</comment>
<comment type="similarity">
    <text evidence="1">Belongs to the PdxA family.</text>
</comment>
<name>PDXA_ECO55</name>
<gene>
    <name evidence="1" type="primary">pdxA</name>
    <name type="ordered locus">EC55989_0052</name>
</gene>
<dbReference type="EC" id="1.1.1.262" evidence="1"/>
<dbReference type="EMBL" id="CU928145">
    <property type="protein sequence ID" value="CAU95939.1"/>
    <property type="molecule type" value="Genomic_DNA"/>
</dbReference>
<dbReference type="RefSeq" id="WP_000241233.1">
    <property type="nucleotide sequence ID" value="NC_011748.1"/>
</dbReference>
<dbReference type="SMR" id="B7L4H5"/>
<dbReference type="KEGG" id="eck:EC55989_0052"/>
<dbReference type="HOGENOM" id="CLU_040168_1_0_6"/>
<dbReference type="UniPathway" id="UPA00244">
    <property type="reaction ID" value="UER00312"/>
</dbReference>
<dbReference type="Proteomes" id="UP000000746">
    <property type="component" value="Chromosome"/>
</dbReference>
<dbReference type="GO" id="GO:0005737">
    <property type="term" value="C:cytoplasm"/>
    <property type="evidence" value="ECO:0007669"/>
    <property type="project" value="UniProtKB-SubCell"/>
</dbReference>
<dbReference type="GO" id="GO:0050570">
    <property type="term" value="F:4-hydroxythreonine-4-phosphate dehydrogenase activity"/>
    <property type="evidence" value="ECO:0007669"/>
    <property type="project" value="UniProtKB-UniRule"/>
</dbReference>
<dbReference type="GO" id="GO:0050897">
    <property type="term" value="F:cobalt ion binding"/>
    <property type="evidence" value="ECO:0007669"/>
    <property type="project" value="UniProtKB-UniRule"/>
</dbReference>
<dbReference type="GO" id="GO:0000287">
    <property type="term" value="F:magnesium ion binding"/>
    <property type="evidence" value="ECO:0007669"/>
    <property type="project" value="UniProtKB-UniRule"/>
</dbReference>
<dbReference type="GO" id="GO:0051287">
    <property type="term" value="F:NAD binding"/>
    <property type="evidence" value="ECO:0007669"/>
    <property type="project" value="InterPro"/>
</dbReference>
<dbReference type="GO" id="GO:0008270">
    <property type="term" value="F:zinc ion binding"/>
    <property type="evidence" value="ECO:0007669"/>
    <property type="project" value="UniProtKB-UniRule"/>
</dbReference>
<dbReference type="GO" id="GO:0042823">
    <property type="term" value="P:pyridoxal phosphate biosynthetic process"/>
    <property type="evidence" value="ECO:0007669"/>
    <property type="project" value="UniProtKB-UniRule"/>
</dbReference>
<dbReference type="GO" id="GO:0008615">
    <property type="term" value="P:pyridoxine biosynthetic process"/>
    <property type="evidence" value="ECO:0007669"/>
    <property type="project" value="UniProtKB-UniRule"/>
</dbReference>
<dbReference type="FunFam" id="3.40.718.10:FF:000010">
    <property type="entry name" value="4-hydroxythreonine-4-phosphate dehydrogenase"/>
    <property type="match status" value="1"/>
</dbReference>
<dbReference type="Gene3D" id="3.40.718.10">
    <property type="entry name" value="Isopropylmalate Dehydrogenase"/>
    <property type="match status" value="1"/>
</dbReference>
<dbReference type="HAMAP" id="MF_00536">
    <property type="entry name" value="PdxA"/>
    <property type="match status" value="1"/>
</dbReference>
<dbReference type="InterPro" id="IPR037510">
    <property type="entry name" value="PdxA"/>
</dbReference>
<dbReference type="InterPro" id="IPR005255">
    <property type="entry name" value="PdxA_fam"/>
</dbReference>
<dbReference type="NCBIfam" id="TIGR00557">
    <property type="entry name" value="pdxA"/>
    <property type="match status" value="1"/>
</dbReference>
<dbReference type="PANTHER" id="PTHR30004">
    <property type="entry name" value="4-HYDROXYTHREONINE-4-PHOSPHATE DEHYDROGENASE"/>
    <property type="match status" value="1"/>
</dbReference>
<dbReference type="PANTHER" id="PTHR30004:SF5">
    <property type="entry name" value="4-HYDROXYTHREONINE-4-PHOSPHATE DEHYDROGENASE"/>
    <property type="match status" value="1"/>
</dbReference>
<dbReference type="Pfam" id="PF04166">
    <property type="entry name" value="PdxA"/>
    <property type="match status" value="1"/>
</dbReference>
<dbReference type="SUPFAM" id="SSF53659">
    <property type="entry name" value="Isocitrate/Isopropylmalate dehydrogenase-like"/>
    <property type="match status" value="1"/>
</dbReference>
<reference key="1">
    <citation type="journal article" date="2009" name="PLoS Genet.">
        <title>Organised genome dynamics in the Escherichia coli species results in highly diverse adaptive paths.</title>
        <authorList>
            <person name="Touchon M."/>
            <person name="Hoede C."/>
            <person name="Tenaillon O."/>
            <person name="Barbe V."/>
            <person name="Baeriswyl S."/>
            <person name="Bidet P."/>
            <person name="Bingen E."/>
            <person name="Bonacorsi S."/>
            <person name="Bouchier C."/>
            <person name="Bouvet O."/>
            <person name="Calteau A."/>
            <person name="Chiapello H."/>
            <person name="Clermont O."/>
            <person name="Cruveiller S."/>
            <person name="Danchin A."/>
            <person name="Diard M."/>
            <person name="Dossat C."/>
            <person name="Karoui M.E."/>
            <person name="Frapy E."/>
            <person name="Garry L."/>
            <person name="Ghigo J.M."/>
            <person name="Gilles A.M."/>
            <person name="Johnson J."/>
            <person name="Le Bouguenec C."/>
            <person name="Lescat M."/>
            <person name="Mangenot S."/>
            <person name="Martinez-Jehanne V."/>
            <person name="Matic I."/>
            <person name="Nassif X."/>
            <person name="Oztas S."/>
            <person name="Petit M.A."/>
            <person name="Pichon C."/>
            <person name="Rouy Z."/>
            <person name="Ruf C.S."/>
            <person name="Schneider D."/>
            <person name="Tourret J."/>
            <person name="Vacherie B."/>
            <person name="Vallenet D."/>
            <person name="Medigue C."/>
            <person name="Rocha E.P.C."/>
            <person name="Denamur E."/>
        </authorList>
    </citation>
    <scope>NUCLEOTIDE SEQUENCE [LARGE SCALE GENOMIC DNA]</scope>
    <source>
        <strain>55989 / EAEC</strain>
    </source>
</reference>
<proteinExistence type="inferred from homology"/>
<protein>
    <recommendedName>
        <fullName evidence="1">4-hydroxythreonine-4-phosphate dehydrogenase</fullName>
        <ecNumber evidence="1">1.1.1.262</ecNumber>
    </recommendedName>
    <alternativeName>
        <fullName evidence="1">4-(phosphohydroxy)-L-threonine dehydrogenase</fullName>
    </alternativeName>
</protein>
<keyword id="KW-0170">Cobalt</keyword>
<keyword id="KW-0963">Cytoplasm</keyword>
<keyword id="KW-0460">Magnesium</keyword>
<keyword id="KW-0479">Metal-binding</keyword>
<keyword id="KW-0520">NAD</keyword>
<keyword id="KW-0521">NADP</keyword>
<keyword id="KW-0560">Oxidoreductase</keyword>
<keyword id="KW-0664">Pyridoxine biosynthesis</keyword>
<keyword id="KW-1185">Reference proteome</keyword>
<keyword id="KW-0862">Zinc</keyword>
<sequence length="329" mass="35220">MVKTQRVVITPGEPAGIGPDLVVQLAQREWPVELVVCADATLLIDRAAMLGLPLTLRPYSPNSPAQPQTTGTLTLLPVALRESVTAGQLAIENGHYVVETLARACDGCLNGEFAALITGPVHKGVINDAGIPFTGHTEFFEERSQAKKVVMMLATEELRVALATTHLPLRDIADAITPALLHEVIAILHHDLRTKFGIAEPRILVCGLNPHAGEGGHMGTEEIDTIIPVLDELRAQGMKLNGPLPADTLFQPKYLDNADAVLAMYHDQGLPVLKYQGFGRGVNITLGLPFIRTSVDHGTALELAGRGKADVGSFITALNLAIKMIVNTQ</sequence>
<evidence type="ECO:0000255" key="1">
    <source>
        <dbReference type="HAMAP-Rule" id="MF_00536"/>
    </source>
</evidence>
<organism>
    <name type="scientific">Escherichia coli (strain 55989 / EAEC)</name>
    <dbReference type="NCBI Taxonomy" id="585055"/>
    <lineage>
        <taxon>Bacteria</taxon>
        <taxon>Pseudomonadati</taxon>
        <taxon>Pseudomonadota</taxon>
        <taxon>Gammaproteobacteria</taxon>
        <taxon>Enterobacterales</taxon>
        <taxon>Enterobacteriaceae</taxon>
        <taxon>Escherichia</taxon>
    </lineage>
</organism>
<feature type="chain" id="PRO_1000146487" description="4-hydroxythreonine-4-phosphate dehydrogenase">
    <location>
        <begin position="1"/>
        <end position="329"/>
    </location>
</feature>
<feature type="binding site" evidence="1">
    <location>
        <position position="136"/>
    </location>
    <ligand>
        <name>substrate</name>
    </ligand>
</feature>
<feature type="binding site" evidence="1">
    <location>
        <position position="137"/>
    </location>
    <ligand>
        <name>substrate</name>
    </ligand>
</feature>
<feature type="binding site" evidence="1">
    <location>
        <position position="166"/>
    </location>
    <ligand>
        <name>a divalent metal cation</name>
        <dbReference type="ChEBI" id="CHEBI:60240"/>
        <note>ligand shared between dimeric partners</note>
    </ligand>
</feature>
<feature type="binding site" evidence="1">
    <location>
        <position position="211"/>
    </location>
    <ligand>
        <name>a divalent metal cation</name>
        <dbReference type="ChEBI" id="CHEBI:60240"/>
        <note>ligand shared between dimeric partners</note>
    </ligand>
</feature>
<feature type="binding site" evidence="1">
    <location>
        <position position="266"/>
    </location>
    <ligand>
        <name>a divalent metal cation</name>
        <dbReference type="ChEBI" id="CHEBI:60240"/>
        <note>ligand shared between dimeric partners</note>
    </ligand>
</feature>
<feature type="binding site" evidence="1">
    <location>
        <position position="274"/>
    </location>
    <ligand>
        <name>substrate</name>
    </ligand>
</feature>
<feature type="binding site" evidence="1">
    <location>
        <position position="283"/>
    </location>
    <ligand>
        <name>substrate</name>
    </ligand>
</feature>
<feature type="binding site" evidence="1">
    <location>
        <position position="292"/>
    </location>
    <ligand>
        <name>substrate</name>
    </ligand>
</feature>
<accession>B7L4H5</accession>